<protein>
    <recommendedName>
        <fullName evidence="1">Queuine tRNA-ribosyltransferase</fullName>
        <ecNumber evidence="1">2.4.2.29</ecNumber>
    </recommendedName>
    <alternativeName>
        <fullName evidence="1">Guanine insertion enzyme</fullName>
    </alternativeName>
    <alternativeName>
        <fullName evidence="1">tRNA-guanine transglycosylase</fullName>
    </alternativeName>
</protein>
<keyword id="KW-0328">Glycosyltransferase</keyword>
<keyword id="KW-0479">Metal-binding</keyword>
<keyword id="KW-0671">Queuosine biosynthesis</keyword>
<keyword id="KW-0808">Transferase</keyword>
<keyword id="KW-0819">tRNA processing</keyword>
<keyword id="KW-0862">Zinc</keyword>
<organism>
    <name type="scientific">Clostridium botulinum (strain Kyoto / Type A2)</name>
    <dbReference type="NCBI Taxonomy" id="536232"/>
    <lineage>
        <taxon>Bacteria</taxon>
        <taxon>Bacillati</taxon>
        <taxon>Bacillota</taxon>
        <taxon>Clostridia</taxon>
        <taxon>Eubacteriales</taxon>
        <taxon>Clostridiaceae</taxon>
        <taxon>Clostridium</taxon>
    </lineage>
</organism>
<accession>C1FKF9</accession>
<name>TGT_CLOBJ</name>
<dbReference type="EC" id="2.4.2.29" evidence="1"/>
<dbReference type="EMBL" id="CP001581">
    <property type="protein sequence ID" value="ACO87088.1"/>
    <property type="molecule type" value="Genomic_DNA"/>
</dbReference>
<dbReference type="RefSeq" id="WP_003358072.1">
    <property type="nucleotide sequence ID" value="NC_012563.1"/>
</dbReference>
<dbReference type="SMR" id="C1FKF9"/>
<dbReference type="KEGG" id="cby:CLM_3473"/>
<dbReference type="eggNOG" id="COG0343">
    <property type="taxonomic scope" value="Bacteria"/>
</dbReference>
<dbReference type="HOGENOM" id="CLU_022060_0_1_9"/>
<dbReference type="UniPathway" id="UPA00392"/>
<dbReference type="Proteomes" id="UP000001374">
    <property type="component" value="Chromosome"/>
</dbReference>
<dbReference type="GO" id="GO:0005829">
    <property type="term" value="C:cytosol"/>
    <property type="evidence" value="ECO:0007669"/>
    <property type="project" value="TreeGrafter"/>
</dbReference>
<dbReference type="GO" id="GO:0046872">
    <property type="term" value="F:metal ion binding"/>
    <property type="evidence" value="ECO:0007669"/>
    <property type="project" value="UniProtKB-KW"/>
</dbReference>
<dbReference type="GO" id="GO:0008479">
    <property type="term" value="F:tRNA-guanosine(34) queuine transglycosylase activity"/>
    <property type="evidence" value="ECO:0007669"/>
    <property type="project" value="UniProtKB-UniRule"/>
</dbReference>
<dbReference type="GO" id="GO:0008616">
    <property type="term" value="P:queuosine biosynthetic process"/>
    <property type="evidence" value="ECO:0007669"/>
    <property type="project" value="UniProtKB-UniRule"/>
</dbReference>
<dbReference type="GO" id="GO:0002099">
    <property type="term" value="P:tRNA wobble guanine modification"/>
    <property type="evidence" value="ECO:0007669"/>
    <property type="project" value="TreeGrafter"/>
</dbReference>
<dbReference type="GO" id="GO:0101030">
    <property type="term" value="P:tRNA-guanine transglycosylation"/>
    <property type="evidence" value="ECO:0007669"/>
    <property type="project" value="InterPro"/>
</dbReference>
<dbReference type="FunFam" id="3.20.20.105:FF:000001">
    <property type="entry name" value="Queuine tRNA-ribosyltransferase"/>
    <property type="match status" value="1"/>
</dbReference>
<dbReference type="Gene3D" id="3.20.20.105">
    <property type="entry name" value="Queuine tRNA-ribosyltransferase-like"/>
    <property type="match status" value="1"/>
</dbReference>
<dbReference type="HAMAP" id="MF_00168">
    <property type="entry name" value="Q_tRNA_Tgt"/>
    <property type="match status" value="1"/>
</dbReference>
<dbReference type="InterPro" id="IPR050076">
    <property type="entry name" value="ArchSynthase1/Queuine_TRR"/>
</dbReference>
<dbReference type="InterPro" id="IPR004803">
    <property type="entry name" value="TGT"/>
</dbReference>
<dbReference type="InterPro" id="IPR036511">
    <property type="entry name" value="TGT-like_sf"/>
</dbReference>
<dbReference type="InterPro" id="IPR002616">
    <property type="entry name" value="tRNA_ribo_trans-like"/>
</dbReference>
<dbReference type="NCBIfam" id="TIGR00430">
    <property type="entry name" value="Q_tRNA_tgt"/>
    <property type="match status" value="1"/>
</dbReference>
<dbReference type="NCBIfam" id="TIGR00449">
    <property type="entry name" value="tgt_general"/>
    <property type="match status" value="1"/>
</dbReference>
<dbReference type="PANTHER" id="PTHR46499">
    <property type="entry name" value="QUEUINE TRNA-RIBOSYLTRANSFERASE"/>
    <property type="match status" value="1"/>
</dbReference>
<dbReference type="PANTHER" id="PTHR46499:SF1">
    <property type="entry name" value="QUEUINE TRNA-RIBOSYLTRANSFERASE"/>
    <property type="match status" value="1"/>
</dbReference>
<dbReference type="Pfam" id="PF01702">
    <property type="entry name" value="TGT"/>
    <property type="match status" value="1"/>
</dbReference>
<dbReference type="SUPFAM" id="SSF51713">
    <property type="entry name" value="tRNA-guanine transglycosylase"/>
    <property type="match status" value="1"/>
</dbReference>
<gene>
    <name evidence="1" type="primary">tgt</name>
    <name type="ordered locus">CLM_3473</name>
</gene>
<sequence>MYKLLKKSGKARRGEFTTPHGVIQTPVFMNVGTLAAIKGAVSSMDLKEIGCQVELSNTYHLHLRPGDEVVKKMGGLHKFMNWDRPILTDSGGFQVFSLSKIRKIQEEGVYFNSHIDGRKIFMGPEESMRIQSNLASTIAMAFDECVENPAPREYVEKSVERTTRWLHRCKDEMNRLNSLPDTINNKQMLFGINQGGTYEDIRIEHAKTIAKMDLDGYAIGGLAVGESHEDMYRIIDAVVPHLPEDKPIYLMGVGIPSNILEAVDRGVDFFDCVLPARNGRHAHVFTKEGKINLLNAKFELDDRPIDEGCQCPACKHYTRSYIRHLFKAKEMLAMRLCVLHNLYFYNNLMEEIRDAIDGDYFKEYKERKLKEWGGRA</sequence>
<reference key="1">
    <citation type="submission" date="2008-10" db="EMBL/GenBank/DDBJ databases">
        <title>Genome sequence of Clostridium botulinum A2 Kyoto.</title>
        <authorList>
            <person name="Shrivastava S."/>
            <person name="Brinkac L.M."/>
            <person name="Brown J.L."/>
            <person name="Bruce D."/>
            <person name="Detter C.C."/>
            <person name="Johnson E.A."/>
            <person name="Munk C.A."/>
            <person name="Smith L.A."/>
            <person name="Smith T.J."/>
            <person name="Sutton G."/>
            <person name="Brettin T.S."/>
        </authorList>
    </citation>
    <scope>NUCLEOTIDE SEQUENCE [LARGE SCALE GENOMIC DNA]</scope>
    <source>
        <strain>Kyoto / Type A2</strain>
    </source>
</reference>
<proteinExistence type="inferred from homology"/>
<evidence type="ECO:0000255" key="1">
    <source>
        <dbReference type="HAMAP-Rule" id="MF_00168"/>
    </source>
</evidence>
<feature type="chain" id="PRO_1000197991" description="Queuine tRNA-ribosyltransferase">
    <location>
        <begin position="1"/>
        <end position="376"/>
    </location>
</feature>
<feature type="region of interest" description="RNA binding" evidence="1">
    <location>
        <begin position="252"/>
        <end position="258"/>
    </location>
</feature>
<feature type="region of interest" description="RNA binding; important for wobble base 34 recognition" evidence="1">
    <location>
        <begin position="276"/>
        <end position="280"/>
    </location>
</feature>
<feature type="active site" description="Proton acceptor" evidence="1">
    <location>
        <position position="89"/>
    </location>
</feature>
<feature type="active site" description="Nucleophile" evidence="1">
    <location>
        <position position="271"/>
    </location>
</feature>
<feature type="binding site" evidence="1">
    <location>
        <begin position="89"/>
        <end position="93"/>
    </location>
    <ligand>
        <name>substrate</name>
    </ligand>
</feature>
<feature type="binding site" evidence="1">
    <location>
        <position position="143"/>
    </location>
    <ligand>
        <name>substrate</name>
    </ligand>
</feature>
<feature type="binding site" evidence="1">
    <location>
        <position position="194"/>
    </location>
    <ligand>
        <name>substrate</name>
    </ligand>
</feature>
<feature type="binding site" evidence="1">
    <location>
        <position position="221"/>
    </location>
    <ligand>
        <name>substrate</name>
    </ligand>
</feature>
<feature type="binding site" evidence="1">
    <location>
        <position position="309"/>
    </location>
    <ligand>
        <name>Zn(2+)</name>
        <dbReference type="ChEBI" id="CHEBI:29105"/>
    </ligand>
</feature>
<feature type="binding site" evidence="1">
    <location>
        <position position="311"/>
    </location>
    <ligand>
        <name>Zn(2+)</name>
        <dbReference type="ChEBI" id="CHEBI:29105"/>
    </ligand>
</feature>
<feature type="binding site" evidence="1">
    <location>
        <position position="314"/>
    </location>
    <ligand>
        <name>Zn(2+)</name>
        <dbReference type="ChEBI" id="CHEBI:29105"/>
    </ligand>
</feature>
<feature type="binding site" evidence="1">
    <location>
        <position position="340"/>
    </location>
    <ligand>
        <name>Zn(2+)</name>
        <dbReference type="ChEBI" id="CHEBI:29105"/>
    </ligand>
</feature>
<comment type="function">
    <text evidence="1">Catalyzes the base-exchange of a guanine (G) residue with the queuine precursor 7-aminomethyl-7-deazaguanine (PreQ1) at position 34 (anticodon wobble position) in tRNAs with GU(N) anticodons (tRNA-Asp, -Asn, -His and -Tyr). Catalysis occurs through a double-displacement mechanism. The nucleophile active site attacks the C1' of nucleotide 34 to detach the guanine base from the RNA, forming a covalent enzyme-RNA intermediate. The proton acceptor active site deprotonates the incoming PreQ1, allowing a nucleophilic attack on the C1' of the ribose to form the product. After dissociation, two additional enzymatic reactions on the tRNA convert PreQ1 to queuine (Q), resulting in the hypermodified nucleoside queuosine (7-(((4,5-cis-dihydroxy-2-cyclopenten-1-yl)amino)methyl)-7-deazaguanosine).</text>
</comment>
<comment type="catalytic activity">
    <reaction evidence="1">
        <text>7-aminomethyl-7-carbaguanine + guanosine(34) in tRNA = 7-aminomethyl-7-carbaguanosine(34) in tRNA + guanine</text>
        <dbReference type="Rhea" id="RHEA:24104"/>
        <dbReference type="Rhea" id="RHEA-COMP:10341"/>
        <dbReference type="Rhea" id="RHEA-COMP:10342"/>
        <dbReference type="ChEBI" id="CHEBI:16235"/>
        <dbReference type="ChEBI" id="CHEBI:58703"/>
        <dbReference type="ChEBI" id="CHEBI:74269"/>
        <dbReference type="ChEBI" id="CHEBI:82833"/>
        <dbReference type="EC" id="2.4.2.29"/>
    </reaction>
</comment>
<comment type="cofactor">
    <cofactor evidence="1">
        <name>Zn(2+)</name>
        <dbReference type="ChEBI" id="CHEBI:29105"/>
    </cofactor>
    <text evidence="1">Binds 1 zinc ion per subunit.</text>
</comment>
<comment type="pathway">
    <text evidence="1">tRNA modification; tRNA-queuosine biosynthesis.</text>
</comment>
<comment type="subunit">
    <text evidence="1">Homodimer. Within each dimer, one monomer is responsible for RNA recognition and catalysis, while the other monomer binds to the replacement base PreQ1.</text>
</comment>
<comment type="similarity">
    <text evidence="1">Belongs to the queuine tRNA-ribosyltransferase family.</text>
</comment>